<feature type="chain" id="PRO_0000390009" description="NADH-quinone oxidoreductase subunit K">
    <location>
        <begin position="1"/>
        <end position="105"/>
    </location>
</feature>
<feature type="transmembrane region" description="Helical" evidence="1">
    <location>
        <begin position="7"/>
        <end position="27"/>
    </location>
</feature>
<feature type="transmembrane region" description="Helical" evidence="1">
    <location>
        <begin position="34"/>
        <end position="54"/>
    </location>
</feature>
<feature type="transmembrane region" description="Helical" evidence="1">
    <location>
        <begin position="66"/>
        <end position="86"/>
    </location>
</feature>
<protein>
    <recommendedName>
        <fullName evidence="1">NADH-quinone oxidoreductase subunit K</fullName>
        <ecNumber evidence="1">7.1.1.-</ecNumber>
    </recommendedName>
    <alternativeName>
        <fullName evidence="1">NADH dehydrogenase I subunit K</fullName>
    </alternativeName>
    <alternativeName>
        <fullName evidence="1">NDH-1 subunit K</fullName>
    </alternativeName>
</protein>
<reference key="1">
    <citation type="submission" date="2008-06" db="EMBL/GenBank/DDBJ databases">
        <title>Complete sequence of Chlorobaculum parvum NCIB 8327.</title>
        <authorList>
            <consortium name="US DOE Joint Genome Institute"/>
            <person name="Lucas S."/>
            <person name="Copeland A."/>
            <person name="Lapidus A."/>
            <person name="Glavina del Rio T."/>
            <person name="Dalin E."/>
            <person name="Tice H."/>
            <person name="Bruce D."/>
            <person name="Goodwin L."/>
            <person name="Pitluck S."/>
            <person name="Schmutz J."/>
            <person name="Larimer F."/>
            <person name="Land M."/>
            <person name="Hauser L."/>
            <person name="Kyrpides N."/>
            <person name="Mikhailova N."/>
            <person name="Zhao F."/>
            <person name="Li T."/>
            <person name="Liu Z."/>
            <person name="Overmann J."/>
            <person name="Bryant D.A."/>
            <person name="Richardson P."/>
        </authorList>
    </citation>
    <scope>NUCLEOTIDE SEQUENCE [LARGE SCALE GENOMIC DNA]</scope>
    <source>
        <strain>DSM 263 / NCIMB 8327</strain>
    </source>
</reference>
<organism>
    <name type="scientific">Chlorobaculum parvum (strain DSM 263 / NCIMB 8327)</name>
    <name type="common">Chlorobium vibrioforme subsp. thiosulfatophilum</name>
    <dbReference type="NCBI Taxonomy" id="517417"/>
    <lineage>
        <taxon>Bacteria</taxon>
        <taxon>Pseudomonadati</taxon>
        <taxon>Chlorobiota</taxon>
        <taxon>Chlorobiia</taxon>
        <taxon>Chlorobiales</taxon>
        <taxon>Chlorobiaceae</taxon>
        <taxon>Chlorobaculum</taxon>
    </lineage>
</organism>
<sequence>MEQFLSIGVNHFLTISVLLFSLGMFAVMTRKNAIVILMGVELILNAANINFLTFSKYNGGMEGVMFSLFVIVLAAAEAAVALAIVINIFKTFKTVDVSSVDTMKE</sequence>
<accession>B3QP51</accession>
<proteinExistence type="inferred from homology"/>
<gene>
    <name evidence="1" type="primary">nuoK</name>
    <name type="ordered locus">Cpar_1301</name>
</gene>
<name>NUOK_CHLP8</name>
<dbReference type="EC" id="7.1.1.-" evidence="1"/>
<dbReference type="EMBL" id="CP001099">
    <property type="protein sequence ID" value="ACF11704.1"/>
    <property type="molecule type" value="Genomic_DNA"/>
</dbReference>
<dbReference type="RefSeq" id="WP_012502537.1">
    <property type="nucleotide sequence ID" value="NC_011027.1"/>
</dbReference>
<dbReference type="SMR" id="B3QP51"/>
<dbReference type="STRING" id="517417.Cpar_1301"/>
<dbReference type="KEGG" id="cpc:Cpar_1301"/>
<dbReference type="eggNOG" id="COG0713">
    <property type="taxonomic scope" value="Bacteria"/>
</dbReference>
<dbReference type="HOGENOM" id="CLU_144724_0_0_10"/>
<dbReference type="OrthoDB" id="9810120at2"/>
<dbReference type="Proteomes" id="UP000008811">
    <property type="component" value="Chromosome"/>
</dbReference>
<dbReference type="GO" id="GO:0030964">
    <property type="term" value="C:NADH dehydrogenase complex"/>
    <property type="evidence" value="ECO:0007669"/>
    <property type="project" value="TreeGrafter"/>
</dbReference>
<dbReference type="GO" id="GO:0005886">
    <property type="term" value="C:plasma membrane"/>
    <property type="evidence" value="ECO:0007669"/>
    <property type="project" value="UniProtKB-SubCell"/>
</dbReference>
<dbReference type="GO" id="GO:0050136">
    <property type="term" value="F:NADH:ubiquinone reductase (non-electrogenic) activity"/>
    <property type="evidence" value="ECO:0007669"/>
    <property type="project" value="UniProtKB-UniRule"/>
</dbReference>
<dbReference type="GO" id="GO:0048038">
    <property type="term" value="F:quinone binding"/>
    <property type="evidence" value="ECO:0007669"/>
    <property type="project" value="UniProtKB-KW"/>
</dbReference>
<dbReference type="GO" id="GO:0042773">
    <property type="term" value="P:ATP synthesis coupled electron transport"/>
    <property type="evidence" value="ECO:0007669"/>
    <property type="project" value="InterPro"/>
</dbReference>
<dbReference type="FunFam" id="1.10.287.3510:FF:000001">
    <property type="entry name" value="NADH-quinone oxidoreductase subunit K"/>
    <property type="match status" value="1"/>
</dbReference>
<dbReference type="Gene3D" id="1.10.287.3510">
    <property type="match status" value="1"/>
</dbReference>
<dbReference type="HAMAP" id="MF_01456">
    <property type="entry name" value="NDH1_NuoK"/>
    <property type="match status" value="1"/>
</dbReference>
<dbReference type="InterPro" id="IPR001133">
    <property type="entry name" value="NADH_UbQ_OxRdtase_chain4L/K"/>
</dbReference>
<dbReference type="InterPro" id="IPR039428">
    <property type="entry name" value="NUOK/Mnh_C1-like"/>
</dbReference>
<dbReference type="NCBIfam" id="NF004320">
    <property type="entry name" value="PRK05715.1-2"/>
    <property type="match status" value="1"/>
</dbReference>
<dbReference type="NCBIfam" id="NF004323">
    <property type="entry name" value="PRK05715.1-5"/>
    <property type="match status" value="1"/>
</dbReference>
<dbReference type="PANTHER" id="PTHR11434:SF16">
    <property type="entry name" value="NADH-UBIQUINONE OXIDOREDUCTASE CHAIN 4L"/>
    <property type="match status" value="1"/>
</dbReference>
<dbReference type="PANTHER" id="PTHR11434">
    <property type="entry name" value="NADH-UBIQUINONE OXIDOREDUCTASE SUBUNIT ND4L"/>
    <property type="match status" value="1"/>
</dbReference>
<dbReference type="Pfam" id="PF00420">
    <property type="entry name" value="Oxidored_q2"/>
    <property type="match status" value="1"/>
</dbReference>
<keyword id="KW-0997">Cell inner membrane</keyword>
<keyword id="KW-1003">Cell membrane</keyword>
<keyword id="KW-0472">Membrane</keyword>
<keyword id="KW-0520">NAD</keyword>
<keyword id="KW-0874">Quinone</keyword>
<keyword id="KW-1278">Translocase</keyword>
<keyword id="KW-0812">Transmembrane</keyword>
<keyword id="KW-1133">Transmembrane helix</keyword>
<keyword id="KW-0813">Transport</keyword>
<comment type="function">
    <text evidence="1">NDH-1 shuttles electrons from NADH, via FMN and iron-sulfur (Fe-S) centers, to quinones in the respiratory chain. The immediate electron acceptor for the enzyme in this species is believed to be a menaquinone. Couples the redox reaction to proton translocation (for every two electrons transferred, four hydrogen ions are translocated across the cytoplasmic membrane), and thus conserves the redox energy in a proton gradient.</text>
</comment>
<comment type="catalytic activity">
    <reaction evidence="1">
        <text>a quinone + NADH + 5 H(+)(in) = a quinol + NAD(+) + 4 H(+)(out)</text>
        <dbReference type="Rhea" id="RHEA:57888"/>
        <dbReference type="ChEBI" id="CHEBI:15378"/>
        <dbReference type="ChEBI" id="CHEBI:24646"/>
        <dbReference type="ChEBI" id="CHEBI:57540"/>
        <dbReference type="ChEBI" id="CHEBI:57945"/>
        <dbReference type="ChEBI" id="CHEBI:132124"/>
    </reaction>
</comment>
<comment type="subunit">
    <text evidence="1">NDH-1 is composed of 14 different subunits. Subunits NuoA, H, J, K, L, M, N constitute the membrane sector of the complex.</text>
</comment>
<comment type="subcellular location">
    <subcellularLocation>
        <location evidence="1">Cell inner membrane</location>
        <topology evidence="1">Multi-pass membrane protein</topology>
    </subcellularLocation>
</comment>
<comment type="similarity">
    <text evidence="1">Belongs to the complex I subunit 4L family.</text>
</comment>
<evidence type="ECO:0000255" key="1">
    <source>
        <dbReference type="HAMAP-Rule" id="MF_01456"/>
    </source>
</evidence>